<keyword id="KW-0066">ATP synthesis</keyword>
<keyword id="KW-0997">Cell inner membrane</keyword>
<keyword id="KW-1003">Cell membrane</keyword>
<keyword id="KW-0138">CF(0)</keyword>
<keyword id="KW-0375">Hydrogen ion transport</keyword>
<keyword id="KW-0406">Ion transport</keyword>
<keyword id="KW-0472">Membrane</keyword>
<keyword id="KW-1185">Reference proteome</keyword>
<keyword id="KW-0812">Transmembrane</keyword>
<keyword id="KW-1133">Transmembrane helix</keyword>
<keyword id="KW-0813">Transport</keyword>
<comment type="function">
    <text evidence="1">F(1)F(0) ATP synthase produces ATP from ADP in the presence of a proton or sodium gradient. F-type ATPases consist of two structural domains, F(1) containing the extramembraneous catalytic core and F(0) containing the membrane proton channel, linked together by a central stalk and a peripheral stalk. During catalysis, ATP synthesis in the catalytic domain of F(1) is coupled via a rotary mechanism of the central stalk subunits to proton translocation.</text>
</comment>
<comment type="function">
    <text evidence="1">Component of the F(0) channel, it forms part of the peripheral stalk, linking F(1) to F(0).</text>
</comment>
<comment type="subunit">
    <text evidence="1">F-type ATPases have 2 components, F(1) - the catalytic core - and F(0) - the membrane proton channel. F(1) has five subunits: alpha(3), beta(3), gamma(1), delta(1), epsilon(1). F(0) has three main subunits: a(1), b(2) and c(10-14). The alpha and beta chains form an alternating ring which encloses part of the gamma chain. F(1) is attached to F(0) by a central stalk formed by the gamma and epsilon chains, while a peripheral stalk is formed by the delta and b chains.</text>
</comment>
<comment type="subcellular location">
    <subcellularLocation>
        <location evidence="1">Cell inner membrane</location>
        <topology evidence="1">Single-pass membrane protein</topology>
    </subcellularLocation>
</comment>
<comment type="similarity">
    <text evidence="1">Belongs to the ATPase B chain family.</text>
</comment>
<comment type="sequence caution" evidence="3">
    <conflict type="erroneous initiation">
        <sequence resource="EMBL-CDS" id="ABC44583"/>
    </conflict>
</comment>
<evidence type="ECO:0000255" key="1">
    <source>
        <dbReference type="HAMAP-Rule" id="MF_01398"/>
    </source>
</evidence>
<evidence type="ECO:0000256" key="2">
    <source>
        <dbReference type="SAM" id="MobiDB-lite"/>
    </source>
</evidence>
<evidence type="ECO:0000305" key="3"/>
<protein>
    <recommendedName>
        <fullName evidence="1">ATP synthase subunit b</fullName>
    </recommendedName>
    <alternativeName>
        <fullName evidence="1">ATP synthase F(0) sector subunit b</fullName>
    </alternativeName>
    <alternativeName>
        <fullName evidence="1">ATPase subunit I</fullName>
    </alternativeName>
    <alternativeName>
        <fullName evidence="1">F-type ATPase subunit b</fullName>
        <shortName evidence="1">F-ATPase subunit b</shortName>
    </alternativeName>
</protein>
<accession>Q2S434</accession>
<proteinExistence type="inferred from homology"/>
<name>ATPF_SALRD</name>
<sequence length="169" mass="19627">MTALFAQSLVTPSVGLIFWKTVAFLIFLYILYRFGWGPITESLEEREEEIEHSIQRAEEALEEAKAIQAENEEARREAEQKAQQILREARDSAEELREEEKAKTRREIQEMKEQAQAEIEREKQAALQELRDEVADLAIEAAQKIIENDLDADRHRQLVDDALDDFPTN</sequence>
<organism>
    <name type="scientific">Salinibacter ruber (strain DSM 13855 / M31)</name>
    <dbReference type="NCBI Taxonomy" id="309807"/>
    <lineage>
        <taxon>Bacteria</taxon>
        <taxon>Pseudomonadati</taxon>
        <taxon>Rhodothermota</taxon>
        <taxon>Rhodothermia</taxon>
        <taxon>Rhodothermales</taxon>
        <taxon>Salinibacteraceae</taxon>
        <taxon>Salinibacter</taxon>
    </lineage>
</organism>
<dbReference type="EMBL" id="CP000159">
    <property type="protein sequence ID" value="ABC44583.1"/>
    <property type="status" value="ALT_INIT"/>
    <property type="molecule type" value="Genomic_DNA"/>
</dbReference>
<dbReference type="RefSeq" id="WP_043552096.1">
    <property type="nucleotide sequence ID" value="NC_007677.1"/>
</dbReference>
<dbReference type="RefSeq" id="YP_445047.1">
    <property type="nucleotide sequence ID" value="NC_007677.1"/>
</dbReference>
<dbReference type="SMR" id="Q2S434"/>
<dbReference type="STRING" id="309807.SRU_0913"/>
<dbReference type="EnsemblBacteria" id="ABC44583">
    <property type="protein sequence ID" value="ABC44583"/>
    <property type="gene ID" value="SRU_0913"/>
</dbReference>
<dbReference type="GeneID" id="83727840"/>
<dbReference type="KEGG" id="sru:SRU_0913"/>
<dbReference type="eggNOG" id="COG0711">
    <property type="taxonomic scope" value="Bacteria"/>
</dbReference>
<dbReference type="HOGENOM" id="CLU_079215_4_1_10"/>
<dbReference type="OrthoDB" id="9795289at2"/>
<dbReference type="Proteomes" id="UP000008674">
    <property type="component" value="Chromosome"/>
</dbReference>
<dbReference type="GO" id="GO:0005886">
    <property type="term" value="C:plasma membrane"/>
    <property type="evidence" value="ECO:0007669"/>
    <property type="project" value="UniProtKB-SubCell"/>
</dbReference>
<dbReference type="GO" id="GO:0045259">
    <property type="term" value="C:proton-transporting ATP synthase complex"/>
    <property type="evidence" value="ECO:0007669"/>
    <property type="project" value="UniProtKB-KW"/>
</dbReference>
<dbReference type="GO" id="GO:0046933">
    <property type="term" value="F:proton-transporting ATP synthase activity, rotational mechanism"/>
    <property type="evidence" value="ECO:0007669"/>
    <property type="project" value="UniProtKB-UniRule"/>
</dbReference>
<dbReference type="GO" id="GO:0046961">
    <property type="term" value="F:proton-transporting ATPase activity, rotational mechanism"/>
    <property type="evidence" value="ECO:0007669"/>
    <property type="project" value="TreeGrafter"/>
</dbReference>
<dbReference type="CDD" id="cd06503">
    <property type="entry name" value="ATP-synt_Fo_b"/>
    <property type="match status" value="1"/>
</dbReference>
<dbReference type="Gene3D" id="1.20.5.620">
    <property type="entry name" value="F1F0 ATP synthase subunit B, membrane domain"/>
    <property type="match status" value="1"/>
</dbReference>
<dbReference type="HAMAP" id="MF_01398">
    <property type="entry name" value="ATP_synth_b_bprime"/>
    <property type="match status" value="1"/>
</dbReference>
<dbReference type="InterPro" id="IPR028987">
    <property type="entry name" value="ATP_synth_B-like_membr_sf"/>
</dbReference>
<dbReference type="InterPro" id="IPR002146">
    <property type="entry name" value="ATP_synth_b/b'su_bac/chlpt"/>
</dbReference>
<dbReference type="InterPro" id="IPR005864">
    <property type="entry name" value="ATP_synth_F0_bsu_bac"/>
</dbReference>
<dbReference type="InterPro" id="IPR050059">
    <property type="entry name" value="ATP_synthase_B_chain"/>
</dbReference>
<dbReference type="NCBIfam" id="TIGR01144">
    <property type="entry name" value="ATP_synt_b"/>
    <property type="match status" value="1"/>
</dbReference>
<dbReference type="PANTHER" id="PTHR33445:SF1">
    <property type="entry name" value="ATP SYNTHASE SUBUNIT B"/>
    <property type="match status" value="1"/>
</dbReference>
<dbReference type="PANTHER" id="PTHR33445">
    <property type="entry name" value="ATP SYNTHASE SUBUNIT B', CHLOROPLASTIC"/>
    <property type="match status" value="1"/>
</dbReference>
<dbReference type="Pfam" id="PF00430">
    <property type="entry name" value="ATP-synt_B"/>
    <property type="match status" value="1"/>
</dbReference>
<dbReference type="SUPFAM" id="SSF81573">
    <property type="entry name" value="F1F0 ATP synthase subunit B, membrane domain"/>
    <property type="match status" value="1"/>
</dbReference>
<feature type="chain" id="PRO_0000368736" description="ATP synthase subunit b">
    <location>
        <begin position="1"/>
        <end position="169"/>
    </location>
</feature>
<feature type="transmembrane region" description="Helical" evidence="1">
    <location>
        <begin position="12"/>
        <end position="32"/>
    </location>
</feature>
<feature type="region of interest" description="Disordered" evidence="2">
    <location>
        <begin position="69"/>
        <end position="107"/>
    </location>
</feature>
<feature type="compositionally biased region" description="Basic and acidic residues" evidence="2">
    <location>
        <begin position="87"/>
        <end position="107"/>
    </location>
</feature>
<gene>
    <name evidence="1" type="primary">atpF</name>
    <name type="ordered locus">SRU_0913</name>
</gene>
<reference key="1">
    <citation type="journal article" date="2005" name="Proc. Natl. Acad. Sci. U.S.A.">
        <title>The genome of Salinibacter ruber: convergence and gene exchange among hyperhalophilic bacteria and archaea.</title>
        <authorList>
            <person name="Mongodin E.F."/>
            <person name="Nelson K.E."/>
            <person name="Daugherty S."/>
            <person name="DeBoy R.T."/>
            <person name="Wister J."/>
            <person name="Khouri H."/>
            <person name="Weidman J."/>
            <person name="Walsh D.A."/>
            <person name="Papke R.T."/>
            <person name="Sanchez Perez G."/>
            <person name="Sharma A.K."/>
            <person name="Nesbo C.L."/>
            <person name="MacLeod D."/>
            <person name="Bapteste E."/>
            <person name="Doolittle W.F."/>
            <person name="Charlebois R.L."/>
            <person name="Legault B."/>
            <person name="Rodriguez-Valera F."/>
        </authorList>
    </citation>
    <scope>NUCLEOTIDE SEQUENCE [LARGE SCALE GENOMIC DNA]</scope>
    <source>
        <strain>DSM 13855 / CECT 5946 / M31</strain>
    </source>
</reference>